<evidence type="ECO:0000255" key="1">
    <source>
        <dbReference type="HAMAP-Rule" id="MF_00531"/>
    </source>
</evidence>
<evidence type="ECO:0000305" key="2"/>
<keyword id="KW-0687">Ribonucleoprotein</keyword>
<keyword id="KW-0689">Ribosomal protein</keyword>
<keyword id="KW-0694">RNA-binding</keyword>
<keyword id="KW-0699">rRNA-binding</keyword>
<comment type="function">
    <text evidence="1">Protein S19 forms a complex with S13 that binds strongly to the 16S ribosomal RNA.</text>
</comment>
<comment type="similarity">
    <text evidence="1">Belongs to the universal ribosomal protein uS19 family.</text>
</comment>
<reference key="1">
    <citation type="journal article" date="2007" name="PLoS ONE">
        <title>Paradoxical DNA repair and peroxide resistance gene conservation in Bacillus pumilus SAFR-032.</title>
        <authorList>
            <person name="Gioia J."/>
            <person name="Yerrapragada S."/>
            <person name="Qin X."/>
            <person name="Jiang H."/>
            <person name="Igboeli O.C."/>
            <person name="Muzny D."/>
            <person name="Dugan-Rocha S."/>
            <person name="Ding Y."/>
            <person name="Hawes A."/>
            <person name="Liu W."/>
            <person name="Perez L."/>
            <person name="Kovar C."/>
            <person name="Dinh H."/>
            <person name="Lee S."/>
            <person name="Nazareth L."/>
            <person name="Blyth P."/>
            <person name="Holder M."/>
            <person name="Buhay C."/>
            <person name="Tirumalai M.R."/>
            <person name="Liu Y."/>
            <person name="Dasgupta I."/>
            <person name="Bokhetache L."/>
            <person name="Fujita M."/>
            <person name="Karouia F."/>
            <person name="Eswara Moorthy P."/>
            <person name="Siefert J."/>
            <person name="Uzman A."/>
            <person name="Buzumbo P."/>
            <person name="Verma A."/>
            <person name="Zwiya H."/>
            <person name="McWilliams B.D."/>
            <person name="Olowu A."/>
            <person name="Clinkenbeard K.D."/>
            <person name="Newcombe D."/>
            <person name="Golebiewski L."/>
            <person name="Petrosino J.F."/>
            <person name="Nicholson W.L."/>
            <person name="Fox G.E."/>
            <person name="Venkateswaran K."/>
            <person name="Highlander S.K."/>
            <person name="Weinstock G.M."/>
        </authorList>
    </citation>
    <scope>NUCLEOTIDE SEQUENCE [LARGE SCALE GENOMIC DNA]</scope>
    <source>
        <strain>SAFR-032</strain>
    </source>
</reference>
<name>RS19_BACP2</name>
<feature type="chain" id="PRO_1000060990" description="Small ribosomal subunit protein uS19">
    <location>
        <begin position="1"/>
        <end position="92"/>
    </location>
</feature>
<sequence length="92" mass="10583">MARSLKKGPFVDDHLMAKVEKLNETDKKQVVKTWSRRSTIFPQFIGHTIAVYDGRKHVPVFISEDMVGHKLGEFAPSRTYKGHASDDKKTRR</sequence>
<gene>
    <name evidence="1" type="primary">rpsS</name>
    <name type="ordered locus">BPUM_0106</name>
</gene>
<proteinExistence type="inferred from homology"/>
<protein>
    <recommendedName>
        <fullName evidence="1">Small ribosomal subunit protein uS19</fullName>
    </recommendedName>
    <alternativeName>
        <fullName evidence="2">30S ribosomal protein S19</fullName>
    </alternativeName>
</protein>
<accession>A8F989</accession>
<dbReference type="EMBL" id="CP000813">
    <property type="protein sequence ID" value="ABV60806.1"/>
    <property type="molecule type" value="Genomic_DNA"/>
</dbReference>
<dbReference type="RefSeq" id="WP_003216920.1">
    <property type="nucleotide sequence ID" value="NZ_VEIS01000020.1"/>
</dbReference>
<dbReference type="SMR" id="A8F989"/>
<dbReference type="STRING" id="315750.BPUM_0106"/>
<dbReference type="GeneID" id="66361737"/>
<dbReference type="KEGG" id="bpu:BPUM_0106"/>
<dbReference type="eggNOG" id="COG0185">
    <property type="taxonomic scope" value="Bacteria"/>
</dbReference>
<dbReference type="HOGENOM" id="CLU_144911_0_1_9"/>
<dbReference type="OrthoDB" id="9797833at2"/>
<dbReference type="Proteomes" id="UP000001355">
    <property type="component" value="Chromosome"/>
</dbReference>
<dbReference type="GO" id="GO:0005737">
    <property type="term" value="C:cytoplasm"/>
    <property type="evidence" value="ECO:0007669"/>
    <property type="project" value="UniProtKB-ARBA"/>
</dbReference>
<dbReference type="GO" id="GO:0015935">
    <property type="term" value="C:small ribosomal subunit"/>
    <property type="evidence" value="ECO:0007669"/>
    <property type="project" value="InterPro"/>
</dbReference>
<dbReference type="GO" id="GO:0019843">
    <property type="term" value="F:rRNA binding"/>
    <property type="evidence" value="ECO:0007669"/>
    <property type="project" value="UniProtKB-UniRule"/>
</dbReference>
<dbReference type="GO" id="GO:0003735">
    <property type="term" value="F:structural constituent of ribosome"/>
    <property type="evidence" value="ECO:0007669"/>
    <property type="project" value="InterPro"/>
</dbReference>
<dbReference type="GO" id="GO:0000028">
    <property type="term" value="P:ribosomal small subunit assembly"/>
    <property type="evidence" value="ECO:0007669"/>
    <property type="project" value="TreeGrafter"/>
</dbReference>
<dbReference type="GO" id="GO:0006412">
    <property type="term" value="P:translation"/>
    <property type="evidence" value="ECO:0007669"/>
    <property type="project" value="UniProtKB-UniRule"/>
</dbReference>
<dbReference type="FunFam" id="3.30.860.10:FF:000001">
    <property type="entry name" value="30S ribosomal protein S19"/>
    <property type="match status" value="1"/>
</dbReference>
<dbReference type="Gene3D" id="3.30.860.10">
    <property type="entry name" value="30s Ribosomal Protein S19, Chain A"/>
    <property type="match status" value="1"/>
</dbReference>
<dbReference type="HAMAP" id="MF_00531">
    <property type="entry name" value="Ribosomal_uS19"/>
    <property type="match status" value="1"/>
</dbReference>
<dbReference type="InterPro" id="IPR002222">
    <property type="entry name" value="Ribosomal_uS19"/>
</dbReference>
<dbReference type="InterPro" id="IPR005732">
    <property type="entry name" value="Ribosomal_uS19_bac-type"/>
</dbReference>
<dbReference type="InterPro" id="IPR020934">
    <property type="entry name" value="Ribosomal_uS19_CS"/>
</dbReference>
<dbReference type="InterPro" id="IPR023575">
    <property type="entry name" value="Ribosomal_uS19_SF"/>
</dbReference>
<dbReference type="NCBIfam" id="TIGR01050">
    <property type="entry name" value="rpsS_bact"/>
    <property type="match status" value="1"/>
</dbReference>
<dbReference type="PANTHER" id="PTHR11880">
    <property type="entry name" value="RIBOSOMAL PROTEIN S19P FAMILY MEMBER"/>
    <property type="match status" value="1"/>
</dbReference>
<dbReference type="PANTHER" id="PTHR11880:SF8">
    <property type="entry name" value="SMALL RIBOSOMAL SUBUNIT PROTEIN US19M"/>
    <property type="match status" value="1"/>
</dbReference>
<dbReference type="Pfam" id="PF00203">
    <property type="entry name" value="Ribosomal_S19"/>
    <property type="match status" value="1"/>
</dbReference>
<dbReference type="PIRSF" id="PIRSF002144">
    <property type="entry name" value="Ribosomal_S19"/>
    <property type="match status" value="1"/>
</dbReference>
<dbReference type="PRINTS" id="PR00975">
    <property type="entry name" value="RIBOSOMALS19"/>
</dbReference>
<dbReference type="SUPFAM" id="SSF54570">
    <property type="entry name" value="Ribosomal protein S19"/>
    <property type="match status" value="1"/>
</dbReference>
<dbReference type="PROSITE" id="PS00323">
    <property type="entry name" value="RIBOSOMAL_S19"/>
    <property type="match status" value="1"/>
</dbReference>
<organism>
    <name type="scientific">Bacillus pumilus (strain SAFR-032)</name>
    <dbReference type="NCBI Taxonomy" id="315750"/>
    <lineage>
        <taxon>Bacteria</taxon>
        <taxon>Bacillati</taxon>
        <taxon>Bacillota</taxon>
        <taxon>Bacilli</taxon>
        <taxon>Bacillales</taxon>
        <taxon>Bacillaceae</taxon>
        <taxon>Bacillus</taxon>
    </lineage>
</organism>